<name>RS15_PROMA</name>
<sequence length="89" mass="10136">MTLNTEAKQKIINKHQTHGTDTGSVEVQVAMLSERINQLSKHLQSNNHDFSSRQGLLKMIGQRKRLLNYVKKQSESRYSSLVTKLGIRG</sequence>
<proteinExistence type="inferred from homology"/>
<organism>
    <name type="scientific">Prochlorococcus marinus (strain SARG / CCMP1375 / SS120)</name>
    <dbReference type="NCBI Taxonomy" id="167539"/>
    <lineage>
        <taxon>Bacteria</taxon>
        <taxon>Bacillati</taxon>
        <taxon>Cyanobacteriota</taxon>
        <taxon>Cyanophyceae</taxon>
        <taxon>Synechococcales</taxon>
        <taxon>Prochlorococcaceae</taxon>
        <taxon>Prochlorococcus</taxon>
    </lineage>
</organism>
<protein>
    <recommendedName>
        <fullName evidence="1">Small ribosomal subunit protein uS15</fullName>
    </recommendedName>
    <alternativeName>
        <fullName evidence="3">30S ribosomal protein S15</fullName>
    </alternativeName>
</protein>
<accession>Q7VCI7</accession>
<gene>
    <name evidence="1" type="primary">rpsO</name>
    <name evidence="1" type="synonym">rps15</name>
    <name type="ordered locus">Pro_0753</name>
</gene>
<dbReference type="EMBL" id="AE017126">
    <property type="protein sequence ID" value="AAP99797.1"/>
    <property type="molecule type" value="Genomic_DNA"/>
</dbReference>
<dbReference type="RefSeq" id="NP_875145.1">
    <property type="nucleotide sequence ID" value="NC_005042.1"/>
</dbReference>
<dbReference type="RefSeq" id="WP_011124905.1">
    <property type="nucleotide sequence ID" value="NC_005042.1"/>
</dbReference>
<dbReference type="SMR" id="Q7VCI7"/>
<dbReference type="STRING" id="167539.Pro_0753"/>
<dbReference type="EnsemblBacteria" id="AAP99797">
    <property type="protein sequence ID" value="AAP99797"/>
    <property type="gene ID" value="Pro_0753"/>
</dbReference>
<dbReference type="KEGG" id="pma:Pro_0753"/>
<dbReference type="PATRIC" id="fig|167539.5.peg.797"/>
<dbReference type="eggNOG" id="COG0184">
    <property type="taxonomic scope" value="Bacteria"/>
</dbReference>
<dbReference type="HOGENOM" id="CLU_148518_0_1_3"/>
<dbReference type="OrthoDB" id="9799262at2"/>
<dbReference type="Proteomes" id="UP000001420">
    <property type="component" value="Chromosome"/>
</dbReference>
<dbReference type="GO" id="GO:0022627">
    <property type="term" value="C:cytosolic small ribosomal subunit"/>
    <property type="evidence" value="ECO:0007669"/>
    <property type="project" value="TreeGrafter"/>
</dbReference>
<dbReference type="GO" id="GO:0019843">
    <property type="term" value="F:rRNA binding"/>
    <property type="evidence" value="ECO:0007669"/>
    <property type="project" value="UniProtKB-UniRule"/>
</dbReference>
<dbReference type="GO" id="GO:0003735">
    <property type="term" value="F:structural constituent of ribosome"/>
    <property type="evidence" value="ECO:0007669"/>
    <property type="project" value="InterPro"/>
</dbReference>
<dbReference type="GO" id="GO:0006412">
    <property type="term" value="P:translation"/>
    <property type="evidence" value="ECO:0007669"/>
    <property type="project" value="UniProtKB-UniRule"/>
</dbReference>
<dbReference type="CDD" id="cd00353">
    <property type="entry name" value="Ribosomal_S15p_S13e"/>
    <property type="match status" value="1"/>
</dbReference>
<dbReference type="FunFam" id="1.10.287.10:FF:000002">
    <property type="entry name" value="30S ribosomal protein S15"/>
    <property type="match status" value="1"/>
</dbReference>
<dbReference type="Gene3D" id="6.10.250.3130">
    <property type="match status" value="1"/>
</dbReference>
<dbReference type="Gene3D" id="1.10.287.10">
    <property type="entry name" value="S15/NS1, RNA-binding"/>
    <property type="match status" value="1"/>
</dbReference>
<dbReference type="HAMAP" id="MF_01343_B">
    <property type="entry name" value="Ribosomal_uS15_B"/>
    <property type="match status" value="1"/>
</dbReference>
<dbReference type="InterPro" id="IPR000589">
    <property type="entry name" value="Ribosomal_uS15"/>
</dbReference>
<dbReference type="InterPro" id="IPR005290">
    <property type="entry name" value="Ribosomal_uS15_bac-type"/>
</dbReference>
<dbReference type="InterPro" id="IPR009068">
    <property type="entry name" value="uS15_NS1_RNA-bd_sf"/>
</dbReference>
<dbReference type="NCBIfam" id="TIGR00952">
    <property type="entry name" value="S15_bact"/>
    <property type="match status" value="1"/>
</dbReference>
<dbReference type="PANTHER" id="PTHR23321">
    <property type="entry name" value="RIBOSOMAL PROTEIN S15, BACTERIAL AND ORGANELLAR"/>
    <property type="match status" value="1"/>
</dbReference>
<dbReference type="PANTHER" id="PTHR23321:SF26">
    <property type="entry name" value="SMALL RIBOSOMAL SUBUNIT PROTEIN US15M"/>
    <property type="match status" value="1"/>
</dbReference>
<dbReference type="Pfam" id="PF00312">
    <property type="entry name" value="Ribosomal_S15"/>
    <property type="match status" value="1"/>
</dbReference>
<dbReference type="SMART" id="SM01387">
    <property type="entry name" value="Ribosomal_S15"/>
    <property type="match status" value="1"/>
</dbReference>
<dbReference type="SUPFAM" id="SSF47060">
    <property type="entry name" value="S15/NS1 RNA-binding domain"/>
    <property type="match status" value="1"/>
</dbReference>
<dbReference type="PROSITE" id="PS00362">
    <property type="entry name" value="RIBOSOMAL_S15"/>
    <property type="match status" value="1"/>
</dbReference>
<feature type="chain" id="PRO_0000115504" description="Small ribosomal subunit protein uS15">
    <location>
        <begin position="1"/>
        <end position="89"/>
    </location>
</feature>
<feature type="region of interest" description="Disordered" evidence="2">
    <location>
        <begin position="1"/>
        <end position="23"/>
    </location>
</feature>
<evidence type="ECO:0000255" key="1">
    <source>
        <dbReference type="HAMAP-Rule" id="MF_01343"/>
    </source>
</evidence>
<evidence type="ECO:0000256" key="2">
    <source>
        <dbReference type="SAM" id="MobiDB-lite"/>
    </source>
</evidence>
<evidence type="ECO:0000305" key="3"/>
<reference key="1">
    <citation type="journal article" date="2003" name="Proc. Natl. Acad. Sci. U.S.A.">
        <title>Genome sequence of the cyanobacterium Prochlorococcus marinus SS120, a nearly minimal oxyphototrophic genome.</title>
        <authorList>
            <person name="Dufresne A."/>
            <person name="Salanoubat M."/>
            <person name="Partensky F."/>
            <person name="Artiguenave F."/>
            <person name="Axmann I.M."/>
            <person name="Barbe V."/>
            <person name="Duprat S."/>
            <person name="Galperin M.Y."/>
            <person name="Koonin E.V."/>
            <person name="Le Gall F."/>
            <person name="Makarova K.S."/>
            <person name="Ostrowski M."/>
            <person name="Oztas S."/>
            <person name="Robert C."/>
            <person name="Rogozin I.B."/>
            <person name="Scanlan D.J."/>
            <person name="Tandeau de Marsac N."/>
            <person name="Weissenbach J."/>
            <person name="Wincker P."/>
            <person name="Wolf Y.I."/>
            <person name="Hess W.R."/>
        </authorList>
    </citation>
    <scope>NUCLEOTIDE SEQUENCE [LARGE SCALE GENOMIC DNA]</scope>
    <source>
        <strain>SARG / CCMP1375 / SS120</strain>
    </source>
</reference>
<keyword id="KW-1185">Reference proteome</keyword>
<keyword id="KW-0687">Ribonucleoprotein</keyword>
<keyword id="KW-0689">Ribosomal protein</keyword>
<keyword id="KW-0694">RNA-binding</keyword>
<keyword id="KW-0699">rRNA-binding</keyword>
<comment type="function">
    <text evidence="1">One of the primary rRNA binding proteins, it binds directly to 16S rRNA where it helps nucleate assembly of the platform of the 30S subunit by binding and bridging several RNA helices of the 16S rRNA.</text>
</comment>
<comment type="function">
    <text evidence="1">Forms an intersubunit bridge (bridge B4) with the 23S rRNA of the 50S subunit in the ribosome.</text>
</comment>
<comment type="subunit">
    <text evidence="1">Part of the 30S ribosomal subunit. Forms a bridge to the 50S subunit in the 70S ribosome, contacting the 23S rRNA.</text>
</comment>
<comment type="similarity">
    <text evidence="1">Belongs to the universal ribosomal protein uS15 family.</text>
</comment>